<keyword id="KW-0678">Repressor</keyword>
<keyword id="KW-0687">Ribonucleoprotein</keyword>
<keyword id="KW-0689">Ribosomal protein</keyword>
<keyword id="KW-0694">RNA-binding</keyword>
<keyword id="KW-0699">rRNA-binding</keyword>
<keyword id="KW-0810">Translation regulation</keyword>
<keyword id="KW-0820">tRNA-binding</keyword>
<feature type="chain" id="PRO_0000125807" description="Large ribosomal subunit protein uL1">
    <location>
        <begin position="1"/>
        <end position="219"/>
    </location>
</feature>
<sequence length="219" mass="24329">MSRMPFDRQKIVEAVKEAKARAKPRNFTQSVEVAVNLKDIDLKRPENRFKLEVVLPHGRGKDVKIAVIADGAVAEAARRLGLDVISSAELEEIAQSPRQARKLAKKYDFFIAEAPLMPKIGRYLGKYLGPRNKMPVVVPPTMSNLEPIVEKLKKTVRIQLKNNPVVHAPVGTEKMSDEEIAENIETVLNAIIGKLERGESQIKSVYVKTTMGPAVKVKG</sequence>
<reference key="1">
    <citation type="journal article" date="2003" name="Mol. Microbiol.">
        <title>An integrated analysis of the genome of the hyperthermophilic archaeon Pyrococcus abyssi.</title>
        <authorList>
            <person name="Cohen G.N."/>
            <person name="Barbe V."/>
            <person name="Flament D."/>
            <person name="Galperin M."/>
            <person name="Heilig R."/>
            <person name="Lecompte O."/>
            <person name="Poch O."/>
            <person name="Prieur D."/>
            <person name="Querellou J."/>
            <person name="Ripp R."/>
            <person name="Thierry J.-C."/>
            <person name="Van der Oost J."/>
            <person name="Weissenbach J."/>
            <person name="Zivanovic Y."/>
            <person name="Forterre P."/>
        </authorList>
    </citation>
    <scope>NUCLEOTIDE SEQUENCE [LARGE SCALE GENOMIC DNA]</scope>
    <source>
        <strain>GE5 / Orsay</strain>
    </source>
</reference>
<gene>
    <name evidence="1" type="primary">rpl1</name>
    <name type="ordered locus">PYRAB17840</name>
    <name type="ORF">PAB1166</name>
</gene>
<proteinExistence type="inferred from homology"/>
<evidence type="ECO:0000255" key="1">
    <source>
        <dbReference type="HAMAP-Rule" id="MF_01318"/>
    </source>
</evidence>
<evidence type="ECO:0000305" key="2"/>
<protein>
    <recommendedName>
        <fullName evidence="1">Large ribosomal subunit protein uL1</fullName>
    </recommendedName>
    <alternativeName>
        <fullName evidence="2">50S ribosomal protein L1</fullName>
    </alternativeName>
</protein>
<comment type="function">
    <text evidence="1">Binds directly to 23S rRNA. Probably involved in E site tRNA release.</text>
</comment>
<comment type="function">
    <text evidence="1">Protein L1 is also a translational repressor protein, it controls the translation of its operon by binding to its mRNA.</text>
</comment>
<comment type="subunit">
    <text evidence="1">Part of the 50S ribosomal subunit.</text>
</comment>
<comment type="similarity">
    <text evidence="1">Belongs to the universal ribosomal protein uL1 family.</text>
</comment>
<organism>
    <name type="scientific">Pyrococcus abyssi (strain GE5 / Orsay)</name>
    <dbReference type="NCBI Taxonomy" id="272844"/>
    <lineage>
        <taxon>Archaea</taxon>
        <taxon>Methanobacteriati</taxon>
        <taxon>Methanobacteriota</taxon>
        <taxon>Thermococci</taxon>
        <taxon>Thermococcales</taxon>
        <taxon>Thermococcaceae</taxon>
        <taxon>Pyrococcus</taxon>
    </lineage>
</organism>
<accession>Q9UWR8</accession>
<dbReference type="EMBL" id="AJ248288">
    <property type="protein sequence ID" value="CAB50689.1"/>
    <property type="molecule type" value="Genomic_DNA"/>
</dbReference>
<dbReference type="EMBL" id="AJ248283">
    <property type="protein sequence ID" value="CAB50689.1"/>
    <property type="status" value="JOINED"/>
    <property type="molecule type" value="Genomic_DNA"/>
</dbReference>
<dbReference type="PIR" id="C75031">
    <property type="entry name" value="C75031"/>
</dbReference>
<dbReference type="SMR" id="Q9UWR8"/>
<dbReference type="STRING" id="272844.PAB1166"/>
<dbReference type="KEGG" id="pab:PAB1166"/>
<dbReference type="eggNOG" id="arCOG04289">
    <property type="taxonomic scope" value="Archaea"/>
</dbReference>
<dbReference type="PhylomeDB" id="Q9UWR8"/>
<dbReference type="Proteomes" id="UP000000810">
    <property type="component" value="Chromosome"/>
</dbReference>
<dbReference type="GO" id="GO:0015934">
    <property type="term" value="C:large ribosomal subunit"/>
    <property type="evidence" value="ECO:0007669"/>
    <property type="project" value="InterPro"/>
</dbReference>
<dbReference type="GO" id="GO:0019843">
    <property type="term" value="F:rRNA binding"/>
    <property type="evidence" value="ECO:0007669"/>
    <property type="project" value="UniProtKB-UniRule"/>
</dbReference>
<dbReference type="GO" id="GO:0003735">
    <property type="term" value="F:structural constituent of ribosome"/>
    <property type="evidence" value="ECO:0007669"/>
    <property type="project" value="InterPro"/>
</dbReference>
<dbReference type="GO" id="GO:0000049">
    <property type="term" value="F:tRNA binding"/>
    <property type="evidence" value="ECO:0007669"/>
    <property type="project" value="UniProtKB-KW"/>
</dbReference>
<dbReference type="GO" id="GO:0006417">
    <property type="term" value="P:regulation of translation"/>
    <property type="evidence" value="ECO:0007669"/>
    <property type="project" value="UniProtKB-KW"/>
</dbReference>
<dbReference type="GO" id="GO:0006412">
    <property type="term" value="P:translation"/>
    <property type="evidence" value="ECO:0007669"/>
    <property type="project" value="UniProtKB-UniRule"/>
</dbReference>
<dbReference type="CDD" id="cd00403">
    <property type="entry name" value="Ribosomal_L1"/>
    <property type="match status" value="1"/>
</dbReference>
<dbReference type="FunFam" id="3.40.50.790:FF:000005">
    <property type="entry name" value="50S ribosomal protein L1"/>
    <property type="match status" value="1"/>
</dbReference>
<dbReference type="Gene3D" id="3.30.190.20">
    <property type="match status" value="1"/>
</dbReference>
<dbReference type="Gene3D" id="3.40.50.790">
    <property type="match status" value="1"/>
</dbReference>
<dbReference type="HAMAP" id="MF_01318_A">
    <property type="entry name" value="Ribosomal_uL1_A"/>
    <property type="match status" value="1"/>
</dbReference>
<dbReference type="InterPro" id="IPR002143">
    <property type="entry name" value="Ribosomal_uL1"/>
</dbReference>
<dbReference type="InterPro" id="IPR023674">
    <property type="entry name" value="Ribosomal_uL1-like"/>
</dbReference>
<dbReference type="InterPro" id="IPR028364">
    <property type="entry name" value="Ribosomal_uL1/biogenesis"/>
</dbReference>
<dbReference type="InterPro" id="IPR016095">
    <property type="entry name" value="Ribosomal_uL1_3-a/b-sand"/>
</dbReference>
<dbReference type="InterPro" id="IPR023669">
    <property type="entry name" value="Ribosomal_uL1_arc"/>
</dbReference>
<dbReference type="InterPro" id="IPR023673">
    <property type="entry name" value="Ribosomal_uL1_CS"/>
</dbReference>
<dbReference type="NCBIfam" id="NF003244">
    <property type="entry name" value="PRK04203.1"/>
    <property type="match status" value="1"/>
</dbReference>
<dbReference type="PANTHER" id="PTHR36427">
    <property type="entry name" value="54S RIBOSOMAL PROTEIN L1, MITOCHONDRIAL"/>
    <property type="match status" value="1"/>
</dbReference>
<dbReference type="PANTHER" id="PTHR36427:SF3">
    <property type="entry name" value="LARGE RIBOSOMAL SUBUNIT PROTEIN UL1M"/>
    <property type="match status" value="1"/>
</dbReference>
<dbReference type="Pfam" id="PF00687">
    <property type="entry name" value="Ribosomal_L1"/>
    <property type="match status" value="1"/>
</dbReference>
<dbReference type="PIRSF" id="PIRSF002155">
    <property type="entry name" value="Ribosomal_L1"/>
    <property type="match status" value="1"/>
</dbReference>
<dbReference type="SUPFAM" id="SSF56808">
    <property type="entry name" value="Ribosomal protein L1"/>
    <property type="match status" value="1"/>
</dbReference>
<dbReference type="PROSITE" id="PS01199">
    <property type="entry name" value="RIBOSOMAL_L1"/>
    <property type="match status" value="1"/>
</dbReference>
<name>RL1_PYRAB</name>